<dbReference type="EC" id="2.3.1.16" evidence="1"/>
<dbReference type="EMBL" id="CP000800">
    <property type="protein sequence ID" value="ABV20107.1"/>
    <property type="molecule type" value="Genomic_DNA"/>
</dbReference>
<dbReference type="RefSeq" id="WP_000531954.1">
    <property type="nucleotide sequence ID" value="NC_009801.1"/>
</dbReference>
<dbReference type="SMR" id="A7ZPF9"/>
<dbReference type="GeneID" id="75202576"/>
<dbReference type="KEGG" id="ecw:EcE24377A_2638"/>
<dbReference type="HOGENOM" id="CLU_031026_2_0_6"/>
<dbReference type="UniPathway" id="UPA00659"/>
<dbReference type="Proteomes" id="UP000001122">
    <property type="component" value="Chromosome"/>
</dbReference>
<dbReference type="GO" id="GO:0005829">
    <property type="term" value="C:cytosol"/>
    <property type="evidence" value="ECO:0007669"/>
    <property type="project" value="TreeGrafter"/>
</dbReference>
<dbReference type="GO" id="GO:0003988">
    <property type="term" value="F:acetyl-CoA C-acyltransferase activity"/>
    <property type="evidence" value="ECO:0007669"/>
    <property type="project" value="UniProtKB-UniRule"/>
</dbReference>
<dbReference type="GO" id="GO:0006635">
    <property type="term" value="P:fatty acid beta-oxidation"/>
    <property type="evidence" value="ECO:0007669"/>
    <property type="project" value="UniProtKB-UniRule"/>
</dbReference>
<dbReference type="CDD" id="cd00751">
    <property type="entry name" value="thiolase"/>
    <property type="match status" value="1"/>
</dbReference>
<dbReference type="FunFam" id="3.40.47.10:FF:000011">
    <property type="entry name" value="3-ketoacyl-CoA thiolase"/>
    <property type="match status" value="1"/>
</dbReference>
<dbReference type="Gene3D" id="3.40.47.10">
    <property type="match status" value="1"/>
</dbReference>
<dbReference type="HAMAP" id="MF_01618">
    <property type="entry name" value="FadI"/>
    <property type="match status" value="1"/>
</dbReference>
<dbReference type="InterPro" id="IPR012806">
    <property type="entry name" value="Ac-CoA_C-AcTrfase_FadI"/>
</dbReference>
<dbReference type="InterPro" id="IPR002155">
    <property type="entry name" value="Thiolase"/>
</dbReference>
<dbReference type="InterPro" id="IPR016039">
    <property type="entry name" value="Thiolase-like"/>
</dbReference>
<dbReference type="InterPro" id="IPR020615">
    <property type="entry name" value="Thiolase_acyl_enz_int_AS"/>
</dbReference>
<dbReference type="InterPro" id="IPR020610">
    <property type="entry name" value="Thiolase_AS"/>
</dbReference>
<dbReference type="InterPro" id="IPR020617">
    <property type="entry name" value="Thiolase_C"/>
</dbReference>
<dbReference type="InterPro" id="IPR020613">
    <property type="entry name" value="Thiolase_CS"/>
</dbReference>
<dbReference type="InterPro" id="IPR020616">
    <property type="entry name" value="Thiolase_N"/>
</dbReference>
<dbReference type="NCBIfam" id="TIGR01930">
    <property type="entry name" value="AcCoA-C-Actrans"/>
    <property type="match status" value="1"/>
</dbReference>
<dbReference type="NCBIfam" id="TIGR02446">
    <property type="entry name" value="FadI"/>
    <property type="match status" value="1"/>
</dbReference>
<dbReference type="NCBIfam" id="NF006516">
    <property type="entry name" value="PRK08963.1"/>
    <property type="match status" value="1"/>
</dbReference>
<dbReference type="PANTHER" id="PTHR18919:SF107">
    <property type="entry name" value="ACETYL-COA ACETYLTRANSFERASE, CYTOSOLIC"/>
    <property type="match status" value="1"/>
</dbReference>
<dbReference type="PANTHER" id="PTHR18919">
    <property type="entry name" value="ACETYL-COA C-ACYLTRANSFERASE"/>
    <property type="match status" value="1"/>
</dbReference>
<dbReference type="Pfam" id="PF02803">
    <property type="entry name" value="Thiolase_C"/>
    <property type="match status" value="1"/>
</dbReference>
<dbReference type="Pfam" id="PF00108">
    <property type="entry name" value="Thiolase_N"/>
    <property type="match status" value="1"/>
</dbReference>
<dbReference type="PIRSF" id="PIRSF000429">
    <property type="entry name" value="Ac-CoA_Ac_transf"/>
    <property type="match status" value="1"/>
</dbReference>
<dbReference type="SUPFAM" id="SSF53901">
    <property type="entry name" value="Thiolase-like"/>
    <property type="match status" value="2"/>
</dbReference>
<dbReference type="PROSITE" id="PS00098">
    <property type="entry name" value="THIOLASE_1"/>
    <property type="match status" value="1"/>
</dbReference>
<dbReference type="PROSITE" id="PS00737">
    <property type="entry name" value="THIOLASE_2"/>
    <property type="match status" value="1"/>
</dbReference>
<dbReference type="PROSITE" id="PS00099">
    <property type="entry name" value="THIOLASE_3"/>
    <property type="match status" value="1"/>
</dbReference>
<feature type="chain" id="PRO_1000069495" description="3-ketoacyl-CoA thiolase">
    <location>
        <begin position="1"/>
        <end position="436"/>
    </location>
</feature>
<feature type="active site" description="Acyl-thioester intermediate" evidence="1">
    <location>
        <position position="99"/>
    </location>
</feature>
<feature type="active site" description="Proton acceptor" evidence="1">
    <location>
        <position position="392"/>
    </location>
</feature>
<feature type="active site" description="Proton acceptor" evidence="1">
    <location>
        <position position="422"/>
    </location>
</feature>
<evidence type="ECO:0000255" key="1">
    <source>
        <dbReference type="HAMAP-Rule" id="MF_01618"/>
    </source>
</evidence>
<accession>A7ZPF9</accession>
<comment type="function">
    <text evidence="1">Catalyzes the final step of fatty acid oxidation in which acetyl-CoA is released and the CoA ester of a fatty acid two carbons shorter is formed.</text>
</comment>
<comment type="catalytic activity">
    <reaction evidence="1">
        <text>an acyl-CoA + acetyl-CoA = a 3-oxoacyl-CoA + CoA</text>
        <dbReference type="Rhea" id="RHEA:21564"/>
        <dbReference type="ChEBI" id="CHEBI:57287"/>
        <dbReference type="ChEBI" id="CHEBI:57288"/>
        <dbReference type="ChEBI" id="CHEBI:58342"/>
        <dbReference type="ChEBI" id="CHEBI:90726"/>
        <dbReference type="EC" id="2.3.1.16"/>
    </reaction>
</comment>
<comment type="pathway">
    <text evidence="1">Lipid metabolism; fatty acid beta-oxidation.</text>
</comment>
<comment type="subunit">
    <text evidence="1">Heterotetramer of two alpha chains (FadJ) and two beta chains (FadI).</text>
</comment>
<comment type="subcellular location">
    <subcellularLocation>
        <location evidence="1">Cytoplasm</location>
    </subcellularLocation>
</comment>
<comment type="similarity">
    <text evidence="1">Belongs to the thiolase-like superfamily. Thiolase family.</text>
</comment>
<proteinExistence type="inferred from homology"/>
<keyword id="KW-0012">Acyltransferase</keyword>
<keyword id="KW-0963">Cytoplasm</keyword>
<keyword id="KW-0276">Fatty acid metabolism</keyword>
<keyword id="KW-0442">Lipid degradation</keyword>
<keyword id="KW-0443">Lipid metabolism</keyword>
<keyword id="KW-1185">Reference proteome</keyword>
<keyword id="KW-0808">Transferase</keyword>
<reference key="1">
    <citation type="journal article" date="2008" name="J. Bacteriol.">
        <title>The pangenome structure of Escherichia coli: comparative genomic analysis of E. coli commensal and pathogenic isolates.</title>
        <authorList>
            <person name="Rasko D.A."/>
            <person name="Rosovitz M.J."/>
            <person name="Myers G.S.A."/>
            <person name="Mongodin E.F."/>
            <person name="Fricke W.F."/>
            <person name="Gajer P."/>
            <person name="Crabtree J."/>
            <person name="Sebaihia M."/>
            <person name="Thomson N.R."/>
            <person name="Chaudhuri R."/>
            <person name="Henderson I.R."/>
            <person name="Sperandio V."/>
            <person name="Ravel J."/>
        </authorList>
    </citation>
    <scope>NUCLEOTIDE SEQUENCE [LARGE SCALE GENOMIC DNA]</scope>
    <source>
        <strain>E24377A / ETEC</strain>
    </source>
</reference>
<sequence>MGQVLPLVTRQGDRIAIVSGLRTPFARQATAFHGIPAVDLGKMVVGELLARSEIPAEVIEQLVFGQVVQMPEAPNIAREIVLGTGMNVHTDAYSVSRACATSFQAVANVAESLMAGTIRAGIAGGADSSSVLPIGVSKKLARVLVDVNKARTMSQRLKLFSRLRLRDLMPVPPAVAEYSTGLRMGDTAEQMAKTYGITREQQDALAHRSHQRAAQAWSDGKLKEEVMTAFIPPYKQPLVEDNNIRGNSSLADYAKLRPAFDRKHGTVTAANSTPLTDGAAAVILMTESRAKELGLVPLGYLRSYAFTAIDVWQDMLLGPAWSTPLALERAGLTMSDLTLIDMHEAFAAQTLANIQLLGSERFAREVLGRAHATGEVDDSKFNVLGGSIAYGHPFAATGARMITQTLHELRRRGGGFGLVTACAAGGLGAAMVLEAE</sequence>
<gene>
    <name evidence="1" type="primary">fadI</name>
    <name type="ordered locus">EcE24377A_2638</name>
</gene>
<organism>
    <name type="scientific">Escherichia coli O139:H28 (strain E24377A / ETEC)</name>
    <dbReference type="NCBI Taxonomy" id="331111"/>
    <lineage>
        <taxon>Bacteria</taxon>
        <taxon>Pseudomonadati</taxon>
        <taxon>Pseudomonadota</taxon>
        <taxon>Gammaproteobacteria</taxon>
        <taxon>Enterobacterales</taxon>
        <taxon>Enterobacteriaceae</taxon>
        <taxon>Escherichia</taxon>
    </lineage>
</organism>
<protein>
    <recommendedName>
        <fullName evidence="1">3-ketoacyl-CoA thiolase</fullName>
        <ecNumber evidence="1">2.3.1.16</ecNumber>
    </recommendedName>
    <alternativeName>
        <fullName evidence="1">ACSs</fullName>
    </alternativeName>
    <alternativeName>
        <fullName evidence="1">Acetyl-CoA acyltransferase</fullName>
    </alternativeName>
    <alternativeName>
        <fullName evidence="1">Acyl-CoA ligase</fullName>
    </alternativeName>
    <alternativeName>
        <fullName evidence="1">Beta-ketothiolase</fullName>
    </alternativeName>
    <alternativeName>
        <fullName evidence="1">Fatty acid oxidation complex subunit beta</fullName>
    </alternativeName>
</protein>
<name>FADI_ECO24</name>